<organism>
    <name type="scientific">Mus musculus</name>
    <name type="common">Mouse</name>
    <dbReference type="NCBI Taxonomy" id="10090"/>
    <lineage>
        <taxon>Eukaryota</taxon>
        <taxon>Metazoa</taxon>
        <taxon>Chordata</taxon>
        <taxon>Craniata</taxon>
        <taxon>Vertebrata</taxon>
        <taxon>Euteleostomi</taxon>
        <taxon>Mammalia</taxon>
        <taxon>Eutheria</taxon>
        <taxon>Euarchontoglires</taxon>
        <taxon>Glires</taxon>
        <taxon>Rodentia</taxon>
        <taxon>Myomorpha</taxon>
        <taxon>Muroidea</taxon>
        <taxon>Muridae</taxon>
        <taxon>Murinae</taxon>
        <taxon>Mus</taxon>
        <taxon>Mus</taxon>
    </lineage>
</organism>
<comment type="function">
    <text evidence="1">Plays a role in the regulation of the cell surface expression of TLR4.</text>
</comment>
<comment type="subunit">
    <text evidence="4">Interacts with TLR4.</text>
</comment>
<comment type="subcellular location">
    <subcellularLocation>
        <location evidence="5">Secreted</location>
    </subcellularLocation>
</comment>
<comment type="tissue specificity">
    <text evidence="4">Highly expressed in lung, spleen, thymus, and uterus. Moderately expressed in kidney, stomach and placenta. Weakly expressed in brain, heart, liver, small intestine, skeletal muscle and testis.</text>
</comment>
<comment type="similarity">
    <text evidence="5">Belongs to the canopy family.</text>
</comment>
<comment type="sequence caution" evidence="5">
    <conflict type="frameshift">
        <sequence resource="EMBL-CDS" id="BAC25336"/>
    </conflict>
</comment>
<comment type="sequence caution" evidence="5">
    <conflict type="frameshift">
        <sequence resource="EMBL-CDS" id="BAC25383"/>
    </conflict>
</comment>
<sequence>MCGLRFIMGPVRLEILLFILAAYGAWAEATKEEEDDTERLPSKCEVCKLLSMELQEALSRTGRSREVLELGQVLDTGKRKRHVPYSLSETRLEEALENLCERILDYNVHAERKGSLRYAKGQSQTMATLKGLVQKGVKVDLGIPLELWDEPSVEVTFLKKQCETMLEEFEDVVGDWYFHHQEQPLQHFLCERHVLPASETACLREAWTGKEKISDGQEEADDEEEEEEEEITKTSGNPKHDPEDL</sequence>
<reference key="1">
    <citation type="journal article" date="2005" name="Science">
        <title>The transcriptional landscape of the mammalian genome.</title>
        <authorList>
            <person name="Carninci P."/>
            <person name="Kasukawa T."/>
            <person name="Katayama S."/>
            <person name="Gough J."/>
            <person name="Frith M.C."/>
            <person name="Maeda N."/>
            <person name="Oyama R."/>
            <person name="Ravasi T."/>
            <person name="Lenhard B."/>
            <person name="Wells C."/>
            <person name="Kodzius R."/>
            <person name="Shimokawa K."/>
            <person name="Bajic V.B."/>
            <person name="Brenner S.E."/>
            <person name="Batalov S."/>
            <person name="Forrest A.R."/>
            <person name="Zavolan M."/>
            <person name="Davis M.J."/>
            <person name="Wilming L.G."/>
            <person name="Aidinis V."/>
            <person name="Allen J.E."/>
            <person name="Ambesi-Impiombato A."/>
            <person name="Apweiler R."/>
            <person name="Aturaliya R.N."/>
            <person name="Bailey T.L."/>
            <person name="Bansal M."/>
            <person name="Baxter L."/>
            <person name="Beisel K.W."/>
            <person name="Bersano T."/>
            <person name="Bono H."/>
            <person name="Chalk A.M."/>
            <person name="Chiu K.P."/>
            <person name="Choudhary V."/>
            <person name="Christoffels A."/>
            <person name="Clutterbuck D.R."/>
            <person name="Crowe M.L."/>
            <person name="Dalla E."/>
            <person name="Dalrymple B.P."/>
            <person name="de Bono B."/>
            <person name="Della Gatta G."/>
            <person name="di Bernardo D."/>
            <person name="Down T."/>
            <person name="Engstrom P."/>
            <person name="Fagiolini M."/>
            <person name="Faulkner G."/>
            <person name="Fletcher C.F."/>
            <person name="Fukushima T."/>
            <person name="Furuno M."/>
            <person name="Futaki S."/>
            <person name="Gariboldi M."/>
            <person name="Georgii-Hemming P."/>
            <person name="Gingeras T.R."/>
            <person name="Gojobori T."/>
            <person name="Green R.E."/>
            <person name="Gustincich S."/>
            <person name="Harbers M."/>
            <person name="Hayashi Y."/>
            <person name="Hensch T.K."/>
            <person name="Hirokawa N."/>
            <person name="Hill D."/>
            <person name="Huminiecki L."/>
            <person name="Iacono M."/>
            <person name="Ikeo K."/>
            <person name="Iwama A."/>
            <person name="Ishikawa T."/>
            <person name="Jakt M."/>
            <person name="Kanapin A."/>
            <person name="Katoh M."/>
            <person name="Kawasawa Y."/>
            <person name="Kelso J."/>
            <person name="Kitamura H."/>
            <person name="Kitano H."/>
            <person name="Kollias G."/>
            <person name="Krishnan S.P."/>
            <person name="Kruger A."/>
            <person name="Kummerfeld S.K."/>
            <person name="Kurochkin I.V."/>
            <person name="Lareau L.F."/>
            <person name="Lazarevic D."/>
            <person name="Lipovich L."/>
            <person name="Liu J."/>
            <person name="Liuni S."/>
            <person name="McWilliam S."/>
            <person name="Madan Babu M."/>
            <person name="Madera M."/>
            <person name="Marchionni L."/>
            <person name="Matsuda H."/>
            <person name="Matsuzawa S."/>
            <person name="Miki H."/>
            <person name="Mignone F."/>
            <person name="Miyake S."/>
            <person name="Morris K."/>
            <person name="Mottagui-Tabar S."/>
            <person name="Mulder N."/>
            <person name="Nakano N."/>
            <person name="Nakauchi H."/>
            <person name="Ng P."/>
            <person name="Nilsson R."/>
            <person name="Nishiguchi S."/>
            <person name="Nishikawa S."/>
            <person name="Nori F."/>
            <person name="Ohara O."/>
            <person name="Okazaki Y."/>
            <person name="Orlando V."/>
            <person name="Pang K.C."/>
            <person name="Pavan W.J."/>
            <person name="Pavesi G."/>
            <person name="Pesole G."/>
            <person name="Petrovsky N."/>
            <person name="Piazza S."/>
            <person name="Reed J."/>
            <person name="Reid J.F."/>
            <person name="Ring B.Z."/>
            <person name="Ringwald M."/>
            <person name="Rost B."/>
            <person name="Ruan Y."/>
            <person name="Salzberg S.L."/>
            <person name="Sandelin A."/>
            <person name="Schneider C."/>
            <person name="Schoenbach C."/>
            <person name="Sekiguchi K."/>
            <person name="Semple C.A."/>
            <person name="Seno S."/>
            <person name="Sessa L."/>
            <person name="Sheng Y."/>
            <person name="Shibata Y."/>
            <person name="Shimada H."/>
            <person name="Shimada K."/>
            <person name="Silva D."/>
            <person name="Sinclair B."/>
            <person name="Sperling S."/>
            <person name="Stupka E."/>
            <person name="Sugiura K."/>
            <person name="Sultana R."/>
            <person name="Takenaka Y."/>
            <person name="Taki K."/>
            <person name="Tammoja K."/>
            <person name="Tan S.L."/>
            <person name="Tang S."/>
            <person name="Taylor M.S."/>
            <person name="Tegner J."/>
            <person name="Teichmann S.A."/>
            <person name="Ueda H.R."/>
            <person name="van Nimwegen E."/>
            <person name="Verardo R."/>
            <person name="Wei C.L."/>
            <person name="Yagi K."/>
            <person name="Yamanishi H."/>
            <person name="Zabarovsky E."/>
            <person name="Zhu S."/>
            <person name="Zimmer A."/>
            <person name="Hide W."/>
            <person name="Bult C."/>
            <person name="Grimmond S.M."/>
            <person name="Teasdale R.D."/>
            <person name="Liu E.T."/>
            <person name="Brusic V."/>
            <person name="Quackenbush J."/>
            <person name="Wahlestedt C."/>
            <person name="Mattick J.S."/>
            <person name="Hume D.A."/>
            <person name="Kai C."/>
            <person name="Sasaki D."/>
            <person name="Tomaru Y."/>
            <person name="Fukuda S."/>
            <person name="Kanamori-Katayama M."/>
            <person name="Suzuki M."/>
            <person name="Aoki J."/>
            <person name="Arakawa T."/>
            <person name="Iida J."/>
            <person name="Imamura K."/>
            <person name="Itoh M."/>
            <person name="Kato T."/>
            <person name="Kawaji H."/>
            <person name="Kawagashira N."/>
            <person name="Kawashima T."/>
            <person name="Kojima M."/>
            <person name="Kondo S."/>
            <person name="Konno H."/>
            <person name="Nakano K."/>
            <person name="Ninomiya N."/>
            <person name="Nishio T."/>
            <person name="Okada M."/>
            <person name="Plessy C."/>
            <person name="Shibata K."/>
            <person name="Shiraki T."/>
            <person name="Suzuki S."/>
            <person name="Tagami M."/>
            <person name="Waki K."/>
            <person name="Watahiki A."/>
            <person name="Okamura-Oho Y."/>
            <person name="Suzuki H."/>
            <person name="Kawai J."/>
            <person name="Hayashizaki Y."/>
        </authorList>
    </citation>
    <scope>NUCLEOTIDE SEQUENCE [LARGE SCALE MRNA]</scope>
    <source>
        <strain>C57BL/6J</strain>
        <tissue>Spinal ganglion</tissue>
        <tissue>Testis</tissue>
    </source>
</reference>
<reference key="2">
    <citation type="journal article" date="2004" name="Genome Res.">
        <title>The status, quality, and expansion of the NIH full-length cDNA project: the Mammalian Gene Collection (MGC).</title>
        <authorList>
            <consortium name="The MGC Project Team"/>
        </authorList>
    </citation>
    <scope>NUCLEOTIDE SEQUENCE [LARGE SCALE MRNA]</scope>
    <source>
        <strain>C57BL/6J</strain>
        <tissue>Brain</tissue>
    </source>
</reference>
<reference key="3">
    <citation type="journal article" date="2006" name="Biochem. Biophys. Res. Commun.">
        <title>A molecule that is associated with Toll-like receptor 4 and regulates its cell surface expression.</title>
        <authorList>
            <person name="Konno K."/>
            <person name="Wakabayashi Y."/>
            <person name="Akashi-Takamura S."/>
            <person name="Ishii T."/>
            <person name="Kobayashi M."/>
            <person name="Takahashi K."/>
            <person name="Kusumoto Y."/>
            <person name="Saitoh S."/>
            <person name="Yoshizawa Y."/>
            <person name="Miyake K."/>
        </authorList>
    </citation>
    <scope>INTERACTION WITH TLR4</scope>
    <scope>TISSUE SPECIFICITY</scope>
</reference>
<reference key="4">
    <citation type="journal article" date="2010" name="Cell">
        <title>A tissue-specific atlas of mouse protein phosphorylation and expression.</title>
        <authorList>
            <person name="Huttlin E.L."/>
            <person name="Jedrychowski M.P."/>
            <person name="Elias J.E."/>
            <person name="Goswami T."/>
            <person name="Rad R."/>
            <person name="Beausoleil S.A."/>
            <person name="Villen J."/>
            <person name="Haas W."/>
            <person name="Sowa M.E."/>
            <person name="Gygi S.P."/>
        </authorList>
    </citation>
    <scope>IDENTIFICATION BY MASS SPECTROMETRY [LARGE SCALE ANALYSIS]</scope>
    <source>
        <tissue>Brain</tissue>
        <tissue>Brown adipose tissue</tissue>
        <tissue>Heart</tissue>
        <tissue>Kidney</tissue>
        <tissue>Liver</tissue>
        <tissue>Lung</tissue>
        <tissue>Spleen</tissue>
        <tissue>Testis</tissue>
    </source>
</reference>
<feature type="signal peptide" evidence="2">
    <location>
        <begin position="1"/>
        <end position="27"/>
    </location>
</feature>
<feature type="chain" id="PRO_0000314019" description="Protein canopy homolog 4">
    <location>
        <begin position="28"/>
        <end position="245"/>
    </location>
</feature>
<feature type="region of interest" description="Disordered" evidence="3">
    <location>
        <begin position="207"/>
        <end position="245"/>
    </location>
</feature>
<feature type="coiled-coil region" evidence="2">
    <location>
        <begin position="209"/>
        <end position="237"/>
    </location>
</feature>
<feature type="compositionally biased region" description="Acidic residues" evidence="3">
    <location>
        <begin position="216"/>
        <end position="230"/>
    </location>
</feature>
<feature type="disulfide bond" evidence="1">
    <location>
        <begin position="44"/>
        <end position="202"/>
    </location>
</feature>
<feature type="disulfide bond" evidence="1">
    <location>
        <begin position="47"/>
        <end position="190"/>
    </location>
</feature>
<feature type="disulfide bond" evidence="1">
    <location>
        <begin position="100"/>
        <end position="162"/>
    </location>
</feature>
<feature type="sequence conflict" description="In Ref. 1; BAC28201." evidence="5" ref="1">
    <original>A</original>
    <variation>V</variation>
    <location>
        <position position="22"/>
    </location>
</feature>
<feature type="sequence conflict" description="In Ref. 1; BAC25383." evidence="5" ref="1">
    <original>T</original>
    <variation>K</variation>
    <location>
        <position position="164"/>
    </location>
</feature>
<feature type="sequence conflict" description="In Ref. 1; BAC25383." evidence="5" ref="1">
    <original>EADD</original>
    <variation>APDH</variation>
    <location>
        <begin position="219"/>
        <end position="222"/>
    </location>
</feature>
<proteinExistence type="evidence at protein level"/>
<gene>
    <name type="primary">Cnpy4</name>
    <name type="synonym">Prat4b</name>
</gene>
<name>CNPY4_MOUSE</name>
<evidence type="ECO:0000250" key="1"/>
<evidence type="ECO:0000255" key="2"/>
<evidence type="ECO:0000256" key="3">
    <source>
        <dbReference type="SAM" id="MobiDB-lite"/>
    </source>
</evidence>
<evidence type="ECO:0000269" key="4">
    <source>
    </source>
</evidence>
<evidence type="ECO:0000305" key="5"/>
<dbReference type="EMBL" id="AK011474">
    <property type="protein sequence ID" value="BAC25336.1"/>
    <property type="status" value="ALT_FRAME"/>
    <property type="molecule type" value="mRNA"/>
</dbReference>
<dbReference type="EMBL" id="AK012968">
    <property type="protein sequence ID" value="BAC25383.1"/>
    <property type="status" value="ALT_FRAME"/>
    <property type="molecule type" value="mRNA"/>
</dbReference>
<dbReference type="EMBL" id="AK033219">
    <property type="protein sequence ID" value="BAC28201.1"/>
    <property type="molecule type" value="mRNA"/>
</dbReference>
<dbReference type="EMBL" id="AK051562">
    <property type="protein sequence ID" value="BAC34675.1"/>
    <property type="molecule type" value="mRNA"/>
</dbReference>
<dbReference type="EMBL" id="BC086647">
    <property type="protein sequence ID" value="AAH86647.1"/>
    <property type="molecule type" value="mRNA"/>
</dbReference>
<dbReference type="EMBL" id="BC094672">
    <property type="protein sequence ID" value="AAH94672.1"/>
    <property type="molecule type" value="mRNA"/>
</dbReference>
<dbReference type="CCDS" id="CCDS39341.1"/>
<dbReference type="RefSeq" id="NP_848727.1">
    <property type="nucleotide sequence ID" value="NM_178612.5"/>
</dbReference>
<dbReference type="BioGRID" id="211486">
    <property type="interactions" value="3"/>
</dbReference>
<dbReference type="FunCoup" id="Q8BQ47">
    <property type="interactions" value="81"/>
</dbReference>
<dbReference type="IntAct" id="Q8BQ47">
    <property type="interactions" value="1"/>
</dbReference>
<dbReference type="MINT" id="Q8BQ47"/>
<dbReference type="STRING" id="10090.ENSMUSP00000106559"/>
<dbReference type="iPTMnet" id="Q8BQ47"/>
<dbReference type="PhosphoSitePlus" id="Q8BQ47"/>
<dbReference type="jPOST" id="Q8BQ47"/>
<dbReference type="PaxDb" id="10090-ENSMUSP00000106559"/>
<dbReference type="PeptideAtlas" id="Q8BQ47"/>
<dbReference type="ProteomicsDB" id="283582"/>
<dbReference type="Pumba" id="Q8BQ47"/>
<dbReference type="Antibodypedia" id="2588">
    <property type="antibodies" value="51 antibodies from 17 providers"/>
</dbReference>
<dbReference type="DNASU" id="66455"/>
<dbReference type="Ensembl" id="ENSMUST00000110934.9">
    <property type="protein sequence ID" value="ENSMUSP00000106559.3"/>
    <property type="gene ID" value="ENSMUSG00000036968.16"/>
</dbReference>
<dbReference type="GeneID" id="66455"/>
<dbReference type="KEGG" id="mmu:66455"/>
<dbReference type="UCSC" id="uc009aez.1">
    <property type="organism name" value="mouse"/>
</dbReference>
<dbReference type="AGR" id="MGI:1913705"/>
<dbReference type="CTD" id="245812"/>
<dbReference type="MGI" id="MGI:1913705">
    <property type="gene designation" value="Cnpy4"/>
</dbReference>
<dbReference type="VEuPathDB" id="HostDB:ENSMUSG00000036968"/>
<dbReference type="eggNOG" id="KOG4052">
    <property type="taxonomic scope" value="Eukaryota"/>
</dbReference>
<dbReference type="GeneTree" id="ENSGT00390000014072"/>
<dbReference type="HOGENOM" id="CLU_078068_0_1_1"/>
<dbReference type="InParanoid" id="Q8BQ47"/>
<dbReference type="OMA" id="CKFLTME"/>
<dbReference type="OrthoDB" id="6020060at2759"/>
<dbReference type="PhylomeDB" id="Q8BQ47"/>
<dbReference type="TreeFam" id="TF318951"/>
<dbReference type="BioGRID-ORCS" id="66455">
    <property type="hits" value="1 hit in 77 CRISPR screens"/>
</dbReference>
<dbReference type="PRO" id="PR:Q8BQ47"/>
<dbReference type="Proteomes" id="UP000000589">
    <property type="component" value="Chromosome 5"/>
</dbReference>
<dbReference type="RNAct" id="Q8BQ47">
    <property type="molecule type" value="protein"/>
</dbReference>
<dbReference type="Bgee" id="ENSMUSG00000036968">
    <property type="expression patterns" value="Expressed in humerus cartilage element and 223 other cell types or tissues"/>
</dbReference>
<dbReference type="ExpressionAtlas" id="Q8BQ47">
    <property type="expression patterns" value="baseline and differential"/>
</dbReference>
<dbReference type="GO" id="GO:0005576">
    <property type="term" value="C:extracellular region"/>
    <property type="evidence" value="ECO:0007669"/>
    <property type="project" value="UniProtKB-SubCell"/>
</dbReference>
<dbReference type="GO" id="GO:0005102">
    <property type="term" value="F:signaling receptor binding"/>
    <property type="evidence" value="ECO:0000353"/>
    <property type="project" value="MGI"/>
</dbReference>
<dbReference type="GO" id="GO:1903078">
    <property type="term" value="P:positive regulation of protein localization to plasma membrane"/>
    <property type="evidence" value="ECO:0007669"/>
    <property type="project" value="Ensembl"/>
</dbReference>
<dbReference type="GO" id="GO:0032880">
    <property type="term" value="P:regulation of protein localization"/>
    <property type="evidence" value="ECO:0000266"/>
    <property type="project" value="MGI"/>
</dbReference>
<dbReference type="InterPro" id="IPR021852">
    <property type="entry name" value="DUF3456"/>
</dbReference>
<dbReference type="PANTHER" id="PTHR15382">
    <property type="entry name" value="CTG4A-RELATED"/>
    <property type="match status" value="1"/>
</dbReference>
<dbReference type="PANTHER" id="PTHR15382:SF3">
    <property type="entry name" value="PROTEIN CANOPY HOMOLOG 4"/>
    <property type="match status" value="1"/>
</dbReference>
<dbReference type="Pfam" id="PF11938">
    <property type="entry name" value="DUF3456"/>
    <property type="match status" value="1"/>
</dbReference>
<protein>
    <recommendedName>
        <fullName>Protein canopy homolog 4</fullName>
    </recommendedName>
    <alternativeName>
        <fullName>Protein associated with Tlr4</fullName>
    </alternativeName>
</protein>
<accession>Q8BQ47</accession>
<accession>Q8BT84</accession>
<accession>Q8BTB1</accession>
<accession>Q8CCG0</accession>
<keyword id="KW-0175">Coiled coil</keyword>
<keyword id="KW-1015">Disulfide bond</keyword>
<keyword id="KW-1185">Reference proteome</keyword>
<keyword id="KW-0964">Secreted</keyword>
<keyword id="KW-0732">Signal</keyword>